<name>RECR_BURCH</name>
<keyword id="KW-0227">DNA damage</keyword>
<keyword id="KW-0233">DNA recombination</keyword>
<keyword id="KW-0234">DNA repair</keyword>
<keyword id="KW-0479">Metal-binding</keyword>
<keyword id="KW-0862">Zinc</keyword>
<keyword id="KW-0863">Zinc-finger</keyword>
<reference key="1">
    <citation type="submission" date="2006-08" db="EMBL/GenBank/DDBJ databases">
        <title>Complete sequence of chromosome 1 of Burkholderia cenocepacia HI2424.</title>
        <authorList>
            <person name="Copeland A."/>
            <person name="Lucas S."/>
            <person name="Lapidus A."/>
            <person name="Barry K."/>
            <person name="Detter J.C."/>
            <person name="Glavina del Rio T."/>
            <person name="Hammon N."/>
            <person name="Israni S."/>
            <person name="Pitluck S."/>
            <person name="Chain P."/>
            <person name="Malfatti S."/>
            <person name="Shin M."/>
            <person name="Vergez L."/>
            <person name="Schmutz J."/>
            <person name="Larimer F."/>
            <person name="Land M."/>
            <person name="Hauser L."/>
            <person name="Kyrpides N."/>
            <person name="Kim E."/>
            <person name="LiPuma J.J."/>
            <person name="Gonzalez C.F."/>
            <person name="Konstantinidis K."/>
            <person name="Tiedje J.M."/>
            <person name="Richardson P."/>
        </authorList>
    </citation>
    <scope>NUCLEOTIDE SEQUENCE [LARGE SCALE GENOMIC DNA]</scope>
    <source>
        <strain>HI2424</strain>
    </source>
</reference>
<accession>A0K7U9</accession>
<evidence type="ECO:0000255" key="1">
    <source>
        <dbReference type="HAMAP-Rule" id="MF_00017"/>
    </source>
</evidence>
<comment type="function">
    <text evidence="1">May play a role in DNA repair. It seems to be involved in an RecBC-independent recombinational process of DNA repair. It may act with RecF and RecO.</text>
</comment>
<comment type="similarity">
    <text evidence="1">Belongs to the RecR family.</text>
</comment>
<proteinExistence type="inferred from homology"/>
<organism>
    <name type="scientific">Burkholderia cenocepacia (strain HI2424)</name>
    <dbReference type="NCBI Taxonomy" id="331272"/>
    <lineage>
        <taxon>Bacteria</taxon>
        <taxon>Pseudomonadati</taxon>
        <taxon>Pseudomonadota</taxon>
        <taxon>Betaproteobacteria</taxon>
        <taxon>Burkholderiales</taxon>
        <taxon>Burkholderiaceae</taxon>
        <taxon>Burkholderia</taxon>
        <taxon>Burkholderia cepacia complex</taxon>
    </lineage>
</organism>
<gene>
    <name evidence="1" type="primary">recR</name>
    <name type="ordered locus">Bcen2424_1825</name>
</gene>
<sequence>MKQPSALSALVEALRVLPGVGPKSAQRMAVHLMQHDREGAERLGRSLLFATEHLQHCEKCNTFTEAQICEVCSDEERDPTLLCVVETPADQIMLEQTMTYRGLYFVLMGRLSPLDGIGPKEIHFDRLVRRASDGVVKEVVLATNFTNEGEATAHYLGQTLKARGLAVTRLARGVPVGGELEYVDAGTIARAMLDRRTM</sequence>
<protein>
    <recommendedName>
        <fullName evidence="1">Recombination protein RecR</fullName>
    </recommendedName>
</protein>
<feature type="chain" id="PRO_0000322868" description="Recombination protein RecR">
    <location>
        <begin position="1"/>
        <end position="198"/>
    </location>
</feature>
<feature type="domain" description="Toprim" evidence="1">
    <location>
        <begin position="80"/>
        <end position="175"/>
    </location>
</feature>
<feature type="zinc finger region" description="C4-type" evidence="1">
    <location>
        <begin position="57"/>
        <end position="72"/>
    </location>
</feature>
<dbReference type="EMBL" id="CP000458">
    <property type="protein sequence ID" value="ABK08576.1"/>
    <property type="molecule type" value="Genomic_DNA"/>
</dbReference>
<dbReference type="RefSeq" id="WP_006478665.1">
    <property type="nucleotide sequence ID" value="NC_008542.1"/>
</dbReference>
<dbReference type="SMR" id="A0K7U9"/>
<dbReference type="GeneID" id="93191823"/>
<dbReference type="KEGG" id="bch:Bcen2424_1825"/>
<dbReference type="HOGENOM" id="CLU_060739_1_2_4"/>
<dbReference type="GO" id="GO:0003677">
    <property type="term" value="F:DNA binding"/>
    <property type="evidence" value="ECO:0007669"/>
    <property type="project" value="UniProtKB-UniRule"/>
</dbReference>
<dbReference type="GO" id="GO:0008270">
    <property type="term" value="F:zinc ion binding"/>
    <property type="evidence" value="ECO:0007669"/>
    <property type="project" value="UniProtKB-KW"/>
</dbReference>
<dbReference type="GO" id="GO:0006310">
    <property type="term" value="P:DNA recombination"/>
    <property type="evidence" value="ECO:0007669"/>
    <property type="project" value="UniProtKB-UniRule"/>
</dbReference>
<dbReference type="GO" id="GO:0006281">
    <property type="term" value="P:DNA repair"/>
    <property type="evidence" value="ECO:0007669"/>
    <property type="project" value="UniProtKB-UniRule"/>
</dbReference>
<dbReference type="CDD" id="cd01025">
    <property type="entry name" value="TOPRIM_recR"/>
    <property type="match status" value="1"/>
</dbReference>
<dbReference type="Gene3D" id="3.40.1360.10">
    <property type="match status" value="1"/>
</dbReference>
<dbReference type="Gene3D" id="6.10.250.240">
    <property type="match status" value="1"/>
</dbReference>
<dbReference type="Gene3D" id="1.10.8.420">
    <property type="entry name" value="RecR Domain 1"/>
    <property type="match status" value="1"/>
</dbReference>
<dbReference type="HAMAP" id="MF_00017">
    <property type="entry name" value="RecR"/>
    <property type="match status" value="1"/>
</dbReference>
<dbReference type="InterPro" id="IPR000093">
    <property type="entry name" value="DNA_Rcmb_RecR"/>
</dbReference>
<dbReference type="InterPro" id="IPR023627">
    <property type="entry name" value="Rcmb_RecR"/>
</dbReference>
<dbReference type="InterPro" id="IPR015967">
    <property type="entry name" value="Rcmb_RecR_Znf"/>
</dbReference>
<dbReference type="InterPro" id="IPR006171">
    <property type="entry name" value="TOPRIM_dom"/>
</dbReference>
<dbReference type="InterPro" id="IPR034137">
    <property type="entry name" value="TOPRIM_RecR"/>
</dbReference>
<dbReference type="NCBIfam" id="TIGR00615">
    <property type="entry name" value="recR"/>
    <property type="match status" value="1"/>
</dbReference>
<dbReference type="PANTHER" id="PTHR30446">
    <property type="entry name" value="RECOMBINATION PROTEIN RECR"/>
    <property type="match status" value="1"/>
</dbReference>
<dbReference type="PANTHER" id="PTHR30446:SF0">
    <property type="entry name" value="RECOMBINATION PROTEIN RECR"/>
    <property type="match status" value="1"/>
</dbReference>
<dbReference type="Pfam" id="PF21175">
    <property type="entry name" value="RecR_C"/>
    <property type="match status" value="1"/>
</dbReference>
<dbReference type="Pfam" id="PF21176">
    <property type="entry name" value="RecR_HhH"/>
    <property type="match status" value="1"/>
</dbReference>
<dbReference type="Pfam" id="PF02132">
    <property type="entry name" value="RecR_ZnF"/>
    <property type="match status" value="1"/>
</dbReference>
<dbReference type="Pfam" id="PF13662">
    <property type="entry name" value="Toprim_4"/>
    <property type="match status" value="1"/>
</dbReference>
<dbReference type="SMART" id="SM00493">
    <property type="entry name" value="TOPRIM"/>
    <property type="match status" value="1"/>
</dbReference>
<dbReference type="SUPFAM" id="SSF111304">
    <property type="entry name" value="Recombination protein RecR"/>
    <property type="match status" value="1"/>
</dbReference>
<dbReference type="PROSITE" id="PS01300">
    <property type="entry name" value="RECR"/>
    <property type="match status" value="1"/>
</dbReference>
<dbReference type="PROSITE" id="PS50880">
    <property type="entry name" value="TOPRIM"/>
    <property type="match status" value="1"/>
</dbReference>